<sequence>MVLYTTPFPNSCLSALHAVSWALIFPCYWLVDRLVASFIPTTYEKRQRADDPCYLQLFCTVLFTPVYLALLVAALPFAFLGFIFWSPLQSARRPYSYSRLEDKSPAGGAALLSEWKGTGAGKSFCFATANVCLLPDSLARLNNVFNTQARAKEIGQRIRNGAARPQIKIYIDSPTNTSISAASFSSLVSPQGSDGARAVPGSIKRTASVEYKGDGGRHPSDEAANGPASGEQADGSLEDSCIVRIGGEEGGRAQEADDPAPGSQARNGAGGTPKGQTPNHNQRDGDSGSLGSPSASRESLVKARAGQDSGGSGEPGSNSKLLYKTSVVKKAAARRRRHPDEAFDHEVSAFFPANLDFLCLQEVFDKRAAAKLKEQLHGYFEYILYDVGVYGCHGCCNFKCLNSGLFFASRYPVMDVAYHCYPNGCSFDALASKGALFLKVQVGSTPQDQRIVGYIACTHLHAPPEDSAIRCEQLDLLQDWLADFRKSTSSTSTANPEELVVFDVICGDLNFDNCSSDDKLEQQHSLFTRYKDPCRLGPGEEKPWAIGTLLDINGLYDEDVCTPDNLQKVLESEEGRREYLAFPTSKSPGAGQKGRKDLLKGNGRRIDYMLHAEEGLCPDWKAEVEEFSFITQLSGLTDHLPVAMRLMVSAGEEEA</sequence>
<evidence type="ECO:0000250" key="1"/>
<evidence type="ECO:0000250" key="2">
    <source>
        <dbReference type="UniProtKB" id="Q9JJY3"/>
    </source>
</evidence>
<evidence type="ECO:0000250" key="3">
    <source>
        <dbReference type="UniProtKB" id="Q9NY59"/>
    </source>
</evidence>
<evidence type="ECO:0000255" key="4"/>
<evidence type="ECO:0000256" key="5">
    <source>
        <dbReference type="SAM" id="MobiDB-lite"/>
    </source>
</evidence>
<evidence type="ECO:0000269" key="6">
    <source>
    </source>
</evidence>
<evidence type="ECO:0000269" key="7">
    <source>
    </source>
</evidence>
<evidence type="ECO:0000269" key="8">
    <source>
    </source>
</evidence>
<evidence type="ECO:0000305" key="9"/>
<evidence type="ECO:0000312" key="10">
    <source>
        <dbReference type="RGD" id="619754"/>
    </source>
</evidence>
<evidence type="ECO:0007744" key="11">
    <source>
    </source>
</evidence>
<reference key="1">
    <citation type="journal article" date="1997" name="J. Biol. Chem.">
        <title>cca1 is required for formation of growth-arrested confluent monolayer of rat 3Y1 cells.</title>
        <authorList>
            <person name="Hayashi Y."/>
            <person name="Kiyono T."/>
            <person name="Fujita M."/>
            <person name="Ishibashi M."/>
        </authorList>
    </citation>
    <scope>NUCLEOTIDE SEQUENCE [MRNA]</scope>
</reference>
<reference key="2">
    <citation type="journal article" date="2000" name="Proc. Natl. Acad. Sci. U.S.A.">
        <title>Cloning and characterization of the mammalian brain-specific, Mg2+-dependent neutral sphingomyelinase.</title>
        <authorList>
            <person name="Hofmann K."/>
            <person name="Tomiuk S."/>
            <person name="Wolff G."/>
            <person name="Stoffel W."/>
        </authorList>
    </citation>
    <scope>SUBCELLULAR LOCATION</scope>
    <scope>TISSUE SPECIFICITY</scope>
</reference>
<reference key="3">
    <citation type="journal article" date="2004" name="FASEB J.">
        <title>Expression of neutral sphingomyelinase-2 (NSMase-2) in primary rat hepatocytes modulates IL-beta-induced JNK activation.</title>
        <authorList>
            <person name="Karakashian A.A."/>
            <person name="Giltiay N.V."/>
            <person name="Smith G.M."/>
            <person name="Nikolova-Karakashian M.N."/>
        </authorList>
    </citation>
    <scope>FUNCTION</scope>
    <scope>ENZYME ACTIVITY</scope>
    <scope>COFACTOR</scope>
    <scope>SUBCELLULAR LOCATION</scope>
</reference>
<reference key="4">
    <citation type="journal article" date="2004" name="J. Neurochem.">
        <title>The role of neutral sphingomyelinase produced ceramide in lipopolysaccharide-mediated expression of inducible nitric oxide synthase.</title>
        <authorList>
            <person name="Won J.-S."/>
            <person name="Im Y.-B."/>
            <person name="Khan M."/>
            <person name="Singh A.K."/>
            <person name="Singh I."/>
        </authorList>
    </citation>
    <scope>FUNCTION</scope>
</reference>
<reference key="5">
    <citation type="journal article" date="2012" name="Nat. Commun.">
        <title>Quantitative maps of protein phosphorylation sites across 14 different rat organs and tissues.</title>
        <authorList>
            <person name="Lundby A."/>
            <person name="Secher A."/>
            <person name="Lage K."/>
            <person name="Nordsborg N.B."/>
            <person name="Dmytriyev A."/>
            <person name="Lundby C."/>
            <person name="Olsen J.V."/>
        </authorList>
    </citation>
    <scope>PHOSPHORYLATION [LARGE SCALE ANALYSIS] AT SER-289</scope>
    <scope>IDENTIFICATION BY MASS SPECTROMETRY [LARGE SCALE ANALYSIS]</scope>
</reference>
<organism>
    <name type="scientific">Rattus norvegicus</name>
    <name type="common">Rat</name>
    <dbReference type="NCBI Taxonomy" id="10116"/>
    <lineage>
        <taxon>Eukaryota</taxon>
        <taxon>Metazoa</taxon>
        <taxon>Chordata</taxon>
        <taxon>Craniata</taxon>
        <taxon>Vertebrata</taxon>
        <taxon>Euteleostomi</taxon>
        <taxon>Mammalia</taxon>
        <taxon>Eutheria</taxon>
        <taxon>Euarchontoglires</taxon>
        <taxon>Glires</taxon>
        <taxon>Rodentia</taxon>
        <taxon>Myomorpha</taxon>
        <taxon>Muroidea</taxon>
        <taxon>Muridae</taxon>
        <taxon>Murinae</taxon>
        <taxon>Rattus</taxon>
    </lineage>
</organism>
<feature type="chain" id="PRO_0000075694" description="Sphingomyelin phosphodiesterase 3">
    <location>
        <begin position="1"/>
        <end position="655"/>
    </location>
</feature>
<feature type="topological domain" description="Cytoplasmic" evidence="4">
    <location>
        <begin position="1"/>
        <end position="10"/>
    </location>
</feature>
<feature type="intramembrane region" description="Helical" evidence="4">
    <location>
        <begin position="11"/>
        <end position="31"/>
    </location>
</feature>
<feature type="topological domain" description="Cytoplasmic" evidence="4">
    <location>
        <begin position="32"/>
        <end position="64"/>
    </location>
</feature>
<feature type="intramembrane region" description="Helical" evidence="4">
    <location>
        <begin position="65"/>
        <end position="85"/>
    </location>
</feature>
<feature type="topological domain" description="Cytoplasmic" evidence="4">
    <location>
        <begin position="86"/>
        <end position="655"/>
    </location>
</feature>
<feature type="region of interest" description="Disordered" evidence="5">
    <location>
        <begin position="209"/>
        <end position="237"/>
    </location>
</feature>
<feature type="region of interest" description="Disordered" evidence="5">
    <location>
        <begin position="250"/>
        <end position="320"/>
    </location>
</feature>
<feature type="compositionally biased region" description="Basic and acidic residues" evidence="5">
    <location>
        <begin position="211"/>
        <end position="221"/>
    </location>
</feature>
<feature type="active site" description="Proton acceptor" evidence="1">
    <location>
        <position position="639"/>
    </location>
</feature>
<feature type="binding site" evidence="1">
    <location>
        <position position="362"/>
    </location>
    <ligand>
        <name>Mg(2+)</name>
        <dbReference type="ChEBI" id="CHEBI:18420"/>
    </ligand>
</feature>
<feature type="site" description="Important for substrate recognition" evidence="1">
    <location>
        <position position="510"/>
    </location>
</feature>
<feature type="modified residue" description="Phosphoserine" evidence="2">
    <location>
        <position position="178"/>
    </location>
</feature>
<feature type="modified residue" description="Phosphoserine" evidence="11">
    <location>
        <position position="289"/>
    </location>
</feature>
<feature type="lipid moiety-binding region" description="S-palmitoyl cysteine" evidence="1">
    <location>
        <position position="53"/>
    </location>
</feature>
<feature type="lipid moiety-binding region" description="S-palmitoyl cysteine" evidence="1">
    <location>
        <position position="59"/>
    </location>
</feature>
<feature type="lipid moiety-binding region" description="S-palmitoyl cysteine" evidence="1">
    <location>
        <position position="395"/>
    </location>
</feature>
<feature type="lipid moiety-binding region" description="S-palmitoyl cysteine" evidence="1">
    <location>
        <position position="396"/>
    </location>
</feature>
<accession>O35049</accession>
<comment type="function">
    <text evidence="2 7 8">Catalyzes the hydrolysis of sphingomyelin to form ceramide and phosphocholine. Ceramide mediates numerous cellular functions, such as apoptosis and growth arrest, and is capable of regulating these 2 cellular events independently. Also hydrolyzes sphingosylphosphocholine. Binds to anionic phospholipids (APLs) such as phosphatidylserine (PS) and phosphatidic acid (PA) that modulate enzymatic activity and subcellular location (By similarity). Regulates the cell cycle by acting as a growth suppressor in confluent cells. Acts as a regulator of postnatal development and participates in bone and dentin mineralization. May be involved in IL-1-beta-induced JNK activation in hepatocytes. May act as a mediator in transcriptional regulation of NOS2/iNOS via the NF-kappa-B activation under inflammatory conditions.</text>
</comment>
<comment type="catalytic activity">
    <reaction evidence="8">
        <text>a sphingomyelin + H2O = phosphocholine + an N-acylsphing-4-enine + H(+)</text>
        <dbReference type="Rhea" id="RHEA:19253"/>
        <dbReference type="ChEBI" id="CHEBI:15377"/>
        <dbReference type="ChEBI" id="CHEBI:15378"/>
        <dbReference type="ChEBI" id="CHEBI:17636"/>
        <dbReference type="ChEBI" id="CHEBI:52639"/>
        <dbReference type="ChEBI" id="CHEBI:295975"/>
        <dbReference type="EC" id="3.1.4.12"/>
    </reaction>
    <physiologicalReaction direction="left-to-right" evidence="3">
        <dbReference type="Rhea" id="RHEA:19254"/>
    </physiologicalReaction>
</comment>
<comment type="catalytic activity">
    <reaction evidence="3">
        <text>N-(15Z-tetracosenoyl)sphing-4-enine-1-phosphocholine + H2O = N-(15Z-tetracosenoyl)-sphing-4-enine + phosphocholine + H(+)</text>
        <dbReference type="Rhea" id="RHEA:45320"/>
        <dbReference type="ChEBI" id="CHEBI:15377"/>
        <dbReference type="ChEBI" id="CHEBI:15378"/>
        <dbReference type="ChEBI" id="CHEBI:74450"/>
        <dbReference type="ChEBI" id="CHEBI:74535"/>
        <dbReference type="ChEBI" id="CHEBI:295975"/>
    </reaction>
    <physiologicalReaction direction="left-to-right" evidence="3">
        <dbReference type="Rhea" id="RHEA:45321"/>
    </physiologicalReaction>
</comment>
<comment type="catalytic activity">
    <reaction evidence="3">
        <text>N-(tetracosanoyl)-sphing-4-enine-1-phosphocholine + H2O = N-tetracosanoyl-sphing-4-enine + phosphocholine + H(+)</text>
        <dbReference type="Rhea" id="RHEA:45324"/>
        <dbReference type="ChEBI" id="CHEBI:15377"/>
        <dbReference type="ChEBI" id="CHEBI:15378"/>
        <dbReference type="ChEBI" id="CHEBI:72965"/>
        <dbReference type="ChEBI" id="CHEBI:83360"/>
        <dbReference type="ChEBI" id="CHEBI:295975"/>
    </reaction>
    <physiologicalReaction direction="left-to-right" evidence="3">
        <dbReference type="Rhea" id="RHEA:45325"/>
    </physiologicalReaction>
</comment>
<comment type="catalytic activity">
    <reaction evidence="3">
        <text>an N-(acyl)-sphingosylphosphocholine + H2O = an N-acyl-sphingoid base + phosphocholine + H(+)</text>
        <dbReference type="Rhea" id="RHEA:45300"/>
        <dbReference type="ChEBI" id="CHEBI:15377"/>
        <dbReference type="ChEBI" id="CHEBI:15378"/>
        <dbReference type="ChEBI" id="CHEBI:64583"/>
        <dbReference type="ChEBI" id="CHEBI:83273"/>
        <dbReference type="ChEBI" id="CHEBI:295975"/>
    </reaction>
    <physiologicalReaction direction="left-to-right" evidence="3">
        <dbReference type="Rhea" id="RHEA:45301"/>
    </physiologicalReaction>
</comment>
<comment type="catalytic activity">
    <reaction evidence="3">
        <text>1-hexadecanoyl-sn-glycero-3-phosphocholine + H2O = 1-hexadecanoyl-sn-glycerol + phosphocholine + H(+)</text>
        <dbReference type="Rhea" id="RHEA:41119"/>
        <dbReference type="ChEBI" id="CHEBI:15377"/>
        <dbReference type="ChEBI" id="CHEBI:15378"/>
        <dbReference type="ChEBI" id="CHEBI:72998"/>
        <dbReference type="ChEBI" id="CHEBI:75542"/>
        <dbReference type="ChEBI" id="CHEBI:295975"/>
    </reaction>
    <physiologicalReaction direction="left-to-right" evidence="3">
        <dbReference type="Rhea" id="RHEA:41120"/>
    </physiologicalReaction>
</comment>
<comment type="catalytic activity">
    <reaction evidence="3">
        <text>1-O-octadecyl-sn-glycero-3-phosphocholine + H2O = 1-O-octadecyl-sn-glycerol + phosphocholine + H(+)</text>
        <dbReference type="Rhea" id="RHEA:39923"/>
        <dbReference type="ChEBI" id="CHEBI:15377"/>
        <dbReference type="ChEBI" id="CHEBI:15378"/>
        <dbReference type="ChEBI" id="CHEBI:74001"/>
        <dbReference type="ChEBI" id="CHEBI:75216"/>
        <dbReference type="ChEBI" id="CHEBI:295975"/>
    </reaction>
    <physiologicalReaction direction="left-to-right" evidence="3">
        <dbReference type="Rhea" id="RHEA:39924"/>
    </physiologicalReaction>
</comment>
<comment type="catalytic activity">
    <reaction evidence="3">
        <text>a sphingosylphosphocholine + H2O = a sphingoid base + phosphocholine + H(+)</text>
        <dbReference type="Rhea" id="RHEA:45296"/>
        <dbReference type="ChEBI" id="CHEBI:15377"/>
        <dbReference type="ChEBI" id="CHEBI:15378"/>
        <dbReference type="ChEBI" id="CHEBI:84410"/>
        <dbReference type="ChEBI" id="CHEBI:85171"/>
        <dbReference type="ChEBI" id="CHEBI:295975"/>
    </reaction>
    <physiologicalReaction direction="left-to-right" evidence="3">
        <dbReference type="Rhea" id="RHEA:45297"/>
    </physiologicalReaction>
</comment>
<comment type="catalytic activity">
    <reaction evidence="2">
        <text>N-(hexadecanoyl)-sphing-4-enine-1-phosphocholine + H2O = N-hexadecanoylsphing-4-enine + phosphocholine + H(+)</text>
        <dbReference type="Rhea" id="RHEA:45644"/>
        <dbReference type="ChEBI" id="CHEBI:15377"/>
        <dbReference type="ChEBI" id="CHEBI:15378"/>
        <dbReference type="ChEBI" id="CHEBI:72959"/>
        <dbReference type="ChEBI" id="CHEBI:78646"/>
        <dbReference type="ChEBI" id="CHEBI:295975"/>
    </reaction>
    <physiologicalReaction direction="left-to-right" evidence="2">
        <dbReference type="Rhea" id="RHEA:45645"/>
    </physiologicalReaction>
</comment>
<comment type="cofactor">
    <cofactor evidence="8">
        <name>Mg(2+)</name>
        <dbReference type="ChEBI" id="CHEBI:18420"/>
    </cofactor>
</comment>
<comment type="activity regulation">
    <text evidence="2">Inhibited by nSMase inhibitor GW4869. Binding of anionic phospholipids (APLs) such as phosphatidylserine (PS) and phosphatidic acid (PA) increases enzymatic activity.</text>
</comment>
<comment type="pathway">
    <text evidence="8">Lipid metabolism; sphingolipid metabolism.</text>
</comment>
<comment type="subcellular location">
    <subcellularLocation>
        <location evidence="6">Golgi apparatus membrane</location>
        <topology evidence="6">Lipid-anchor</topology>
    </subcellularLocation>
    <subcellularLocation>
        <location evidence="8">Cell membrane</location>
        <topology evidence="8">Lipid-anchor</topology>
    </subcellularLocation>
    <text>May localize to detergent-resistant subdomains of Golgi membranes of hypothalamic neurosecretory neurons (PubMed:10823942).</text>
</comment>
<comment type="tissue specificity">
    <text evidence="6">In brain sections, it is restricted to neurons and especially prominent in large cells, including Purkinje cells, pyramidal cells, neurons of the dentate gyrus granular layer, and neurons in the pontine nuclei. Also present in the hypothalamic nuclei, neurons in the piriform cortex, and nuclei of the brainstem (at protein level). Mainly expressed in brain and jejunum. Weakly or not expressed in heart, spleen, lung, liver, kidney and testis.</text>
</comment>
<comment type="PTM">
    <text evidence="1">Palmitoylated, palmitoylation-deficient proteins are targeted for lysosomal degradation.</text>
</comment>
<comment type="similarity">
    <text evidence="9">Belongs to the neutral sphingomyelinase family.</text>
</comment>
<comment type="sequence caution" evidence="9">
    <conflict type="frameshift">
        <sequence resource="EMBL-CDS" id="BAA22932"/>
    </conflict>
</comment>
<gene>
    <name evidence="10" type="primary">Smpd3</name>
    <name type="synonym">Cca1</name>
</gene>
<name>NSMA2_RAT</name>
<proteinExistence type="evidence at protein level"/>
<dbReference type="EC" id="3.1.4.12" evidence="8"/>
<dbReference type="EMBL" id="AB000215">
    <property type="protein sequence ID" value="BAA22932.1"/>
    <property type="status" value="ALT_FRAME"/>
    <property type="molecule type" value="mRNA"/>
</dbReference>
<dbReference type="PIR" id="T00011">
    <property type="entry name" value="T00011"/>
</dbReference>
<dbReference type="RefSeq" id="NP_446057.1">
    <property type="nucleotide sequence ID" value="NM_053605.1"/>
</dbReference>
<dbReference type="SMR" id="O35049"/>
<dbReference type="BioGRID" id="250193">
    <property type="interactions" value="1"/>
</dbReference>
<dbReference type="FunCoup" id="O35049">
    <property type="interactions" value="696"/>
</dbReference>
<dbReference type="STRING" id="10116.ENSRNOP00000030458"/>
<dbReference type="BindingDB" id="O35049"/>
<dbReference type="ChEMBL" id="CHEMBL4523130"/>
<dbReference type="iPTMnet" id="O35049"/>
<dbReference type="PhosphoSitePlus" id="O35049"/>
<dbReference type="SwissPalm" id="O35049"/>
<dbReference type="jPOST" id="O35049"/>
<dbReference type="PaxDb" id="10116-ENSRNOP00000000274"/>
<dbReference type="GeneID" id="94338"/>
<dbReference type="KEGG" id="rno:94338"/>
<dbReference type="UCSC" id="RGD:619754">
    <property type="organism name" value="rat"/>
</dbReference>
<dbReference type="AGR" id="RGD:619754"/>
<dbReference type="CTD" id="55512"/>
<dbReference type="RGD" id="619754">
    <property type="gene designation" value="Smpd3"/>
</dbReference>
<dbReference type="eggNOG" id="ENOG502QVS2">
    <property type="taxonomic scope" value="Eukaryota"/>
</dbReference>
<dbReference type="InParanoid" id="O35049"/>
<dbReference type="OrthoDB" id="40902at2759"/>
<dbReference type="PhylomeDB" id="O35049"/>
<dbReference type="Reactome" id="R-RNO-5626978">
    <property type="pathway name" value="TNFR1-mediated ceramide production"/>
</dbReference>
<dbReference type="Reactome" id="R-RNO-9840310">
    <property type="pathway name" value="Glycosphingolipid catabolism"/>
</dbReference>
<dbReference type="SABIO-RK" id="O35049"/>
<dbReference type="UniPathway" id="UPA00222"/>
<dbReference type="PRO" id="PR:O35049"/>
<dbReference type="Proteomes" id="UP000002494">
    <property type="component" value="Unplaced"/>
</dbReference>
<dbReference type="GO" id="GO:0005737">
    <property type="term" value="C:cytoplasm"/>
    <property type="evidence" value="ECO:0000318"/>
    <property type="project" value="GO_Central"/>
</dbReference>
<dbReference type="GO" id="GO:0005576">
    <property type="term" value="C:extracellular region"/>
    <property type="evidence" value="ECO:0007669"/>
    <property type="project" value="InterPro"/>
</dbReference>
<dbReference type="GO" id="GO:0005794">
    <property type="term" value="C:Golgi apparatus"/>
    <property type="evidence" value="ECO:0000266"/>
    <property type="project" value="RGD"/>
</dbReference>
<dbReference type="GO" id="GO:0000137">
    <property type="term" value="C:Golgi cis cisterna"/>
    <property type="evidence" value="ECO:0000266"/>
    <property type="project" value="RGD"/>
</dbReference>
<dbReference type="GO" id="GO:0000139">
    <property type="term" value="C:Golgi membrane"/>
    <property type="evidence" value="ECO:0007669"/>
    <property type="project" value="UniProtKB-SubCell"/>
</dbReference>
<dbReference type="GO" id="GO:0005886">
    <property type="term" value="C:plasma membrane"/>
    <property type="evidence" value="ECO:0000250"/>
    <property type="project" value="UniProtKB"/>
</dbReference>
<dbReference type="GO" id="GO:0042802">
    <property type="term" value="F:identical protein binding"/>
    <property type="evidence" value="ECO:0000266"/>
    <property type="project" value="RGD"/>
</dbReference>
<dbReference type="GO" id="GO:0046872">
    <property type="term" value="F:metal ion binding"/>
    <property type="evidence" value="ECO:0007669"/>
    <property type="project" value="UniProtKB-KW"/>
</dbReference>
<dbReference type="GO" id="GO:0061751">
    <property type="term" value="F:neutral sphingomyelin phosphodiesterase activity"/>
    <property type="evidence" value="ECO:0000266"/>
    <property type="project" value="RGD"/>
</dbReference>
<dbReference type="GO" id="GO:0070300">
    <property type="term" value="F:phosphatidic acid binding"/>
    <property type="evidence" value="ECO:0000250"/>
    <property type="project" value="UniProtKB"/>
</dbReference>
<dbReference type="GO" id="GO:0001786">
    <property type="term" value="F:phosphatidylserine binding"/>
    <property type="evidence" value="ECO:0000250"/>
    <property type="project" value="UniProtKB"/>
</dbReference>
<dbReference type="GO" id="GO:0008081">
    <property type="term" value="F:phosphoric diester hydrolase activity"/>
    <property type="evidence" value="ECO:0000266"/>
    <property type="project" value="RGD"/>
</dbReference>
<dbReference type="GO" id="GO:0004767">
    <property type="term" value="F:sphingomyelin phosphodiesterase activity"/>
    <property type="evidence" value="ECO:0000250"/>
    <property type="project" value="UniProtKB"/>
</dbReference>
<dbReference type="GO" id="GO:0014824">
    <property type="term" value="P:artery smooth muscle contraction"/>
    <property type="evidence" value="ECO:0000315"/>
    <property type="project" value="RGD"/>
</dbReference>
<dbReference type="GO" id="GO:0030509">
    <property type="term" value="P:BMP signaling pathway"/>
    <property type="evidence" value="ECO:0000266"/>
    <property type="project" value="RGD"/>
</dbReference>
<dbReference type="GO" id="GO:0060348">
    <property type="term" value="P:bone development"/>
    <property type="evidence" value="ECO:0000266"/>
    <property type="project" value="RGD"/>
</dbReference>
<dbReference type="GO" id="GO:0098868">
    <property type="term" value="P:bone growth"/>
    <property type="evidence" value="ECO:0000266"/>
    <property type="project" value="RGD"/>
</dbReference>
<dbReference type="GO" id="GO:0030282">
    <property type="term" value="P:bone mineralization"/>
    <property type="evidence" value="ECO:0000266"/>
    <property type="project" value="RGD"/>
</dbReference>
<dbReference type="GO" id="GO:0051216">
    <property type="term" value="P:cartilage development"/>
    <property type="evidence" value="ECO:0000266"/>
    <property type="project" value="RGD"/>
</dbReference>
<dbReference type="GO" id="GO:0070301">
    <property type="term" value="P:cellular response to hydrogen peroxide"/>
    <property type="evidence" value="ECO:0000266"/>
    <property type="project" value="RGD"/>
</dbReference>
<dbReference type="GO" id="GO:0071347">
    <property type="term" value="P:cellular response to interleukin-1"/>
    <property type="evidence" value="ECO:0000270"/>
    <property type="project" value="RGD"/>
</dbReference>
<dbReference type="GO" id="GO:0071286">
    <property type="term" value="P:cellular response to magnesium ion"/>
    <property type="evidence" value="ECO:0000266"/>
    <property type="project" value="RGD"/>
</dbReference>
<dbReference type="GO" id="GO:0140052">
    <property type="term" value="P:cellular response to oxidised low-density lipoprotein particle stimulus"/>
    <property type="evidence" value="ECO:0000266"/>
    <property type="project" value="RGD"/>
</dbReference>
<dbReference type="GO" id="GO:1901653">
    <property type="term" value="P:cellular response to peptide"/>
    <property type="evidence" value="ECO:0000266"/>
    <property type="project" value="RGD"/>
</dbReference>
<dbReference type="GO" id="GO:0034614">
    <property type="term" value="P:cellular response to reactive oxygen species"/>
    <property type="evidence" value="ECO:0000266"/>
    <property type="project" value="RGD"/>
</dbReference>
<dbReference type="GO" id="GO:0071461">
    <property type="term" value="P:cellular response to redox state"/>
    <property type="evidence" value="ECO:0000266"/>
    <property type="project" value="RGD"/>
</dbReference>
<dbReference type="GO" id="GO:0071356">
    <property type="term" value="P:cellular response to tumor necrosis factor"/>
    <property type="evidence" value="ECO:0000266"/>
    <property type="project" value="RGD"/>
</dbReference>
<dbReference type="GO" id="GO:0006672">
    <property type="term" value="P:ceramide metabolic process"/>
    <property type="evidence" value="ECO:0000266"/>
    <property type="project" value="RGD"/>
</dbReference>
<dbReference type="GO" id="GO:0002063">
    <property type="term" value="P:chondrocyte development"/>
    <property type="evidence" value="ECO:0000266"/>
    <property type="project" value="RGD"/>
</dbReference>
<dbReference type="GO" id="GO:0003433">
    <property type="term" value="P:chondrocyte development involved in endochondral bone morphogenesis"/>
    <property type="evidence" value="ECO:0000266"/>
    <property type="project" value="RGD"/>
</dbReference>
<dbReference type="GO" id="GO:0032963">
    <property type="term" value="P:collagen metabolic process"/>
    <property type="evidence" value="ECO:0000266"/>
    <property type="project" value="RGD"/>
</dbReference>
<dbReference type="GO" id="GO:0097187">
    <property type="term" value="P:dentinogenesis"/>
    <property type="evidence" value="ECO:0000266"/>
    <property type="project" value="RGD"/>
</dbReference>
<dbReference type="GO" id="GO:0071897">
    <property type="term" value="P:DNA biosynthetic process"/>
    <property type="evidence" value="ECO:0000266"/>
    <property type="project" value="RGD"/>
</dbReference>
<dbReference type="GO" id="GO:0090494">
    <property type="term" value="P:dopamine uptake"/>
    <property type="evidence" value="ECO:0000315"/>
    <property type="project" value="RGD"/>
</dbReference>
<dbReference type="GO" id="GO:0001958">
    <property type="term" value="P:endochondral ossification"/>
    <property type="evidence" value="ECO:0000266"/>
    <property type="project" value="RGD"/>
</dbReference>
<dbReference type="GO" id="GO:0085029">
    <property type="term" value="P:extracellular matrix assembly"/>
    <property type="evidence" value="ECO:0000266"/>
    <property type="project" value="RGD"/>
</dbReference>
<dbReference type="GO" id="GO:0070314">
    <property type="term" value="P:G1 to G0 transition"/>
    <property type="evidence" value="ECO:0000266"/>
    <property type="project" value="RGD"/>
</dbReference>
<dbReference type="GO" id="GO:0002244">
    <property type="term" value="P:hematopoietic progenitor cell differentiation"/>
    <property type="evidence" value="ECO:0000266"/>
    <property type="project" value="RGD"/>
</dbReference>
<dbReference type="GO" id="GO:0048286">
    <property type="term" value="P:lung alveolus development"/>
    <property type="evidence" value="ECO:0000266"/>
    <property type="project" value="RGD"/>
</dbReference>
<dbReference type="GO" id="GO:0030324">
    <property type="term" value="P:lung development"/>
    <property type="evidence" value="ECO:0000266"/>
    <property type="project" value="RGD"/>
</dbReference>
<dbReference type="GO" id="GO:0140014">
    <property type="term" value="P:mitotic nuclear division"/>
    <property type="evidence" value="ECO:0000266"/>
    <property type="project" value="RGD"/>
</dbReference>
<dbReference type="GO" id="GO:0035264">
    <property type="term" value="P:multicellular organism growth"/>
    <property type="evidence" value="ECO:0000266"/>
    <property type="project" value="RGD"/>
</dbReference>
<dbReference type="GO" id="GO:0051481">
    <property type="term" value="P:negative regulation of cytosolic calcium ion concentration"/>
    <property type="evidence" value="ECO:0000315"/>
    <property type="project" value="RGD"/>
</dbReference>
<dbReference type="GO" id="GO:1900126">
    <property type="term" value="P:negative regulation of hyaluronan biosynthetic process"/>
    <property type="evidence" value="ECO:0000266"/>
    <property type="project" value="RGD"/>
</dbReference>
<dbReference type="GO" id="GO:0051898">
    <property type="term" value="P:negative regulation of phosphatidylinositol 3-kinase/protein kinase B signal transduction"/>
    <property type="evidence" value="ECO:0000266"/>
    <property type="project" value="RGD"/>
</dbReference>
<dbReference type="GO" id="GO:0001503">
    <property type="term" value="P:ossification"/>
    <property type="evidence" value="ECO:0000266"/>
    <property type="project" value="RGD"/>
</dbReference>
<dbReference type="GO" id="GO:0030072">
    <property type="term" value="P:peptide hormone secretion"/>
    <property type="evidence" value="ECO:0000266"/>
    <property type="project" value="RGD"/>
</dbReference>
<dbReference type="GO" id="GO:0048008">
    <property type="term" value="P:platelet-derived growth factor receptor signaling pathway"/>
    <property type="evidence" value="ECO:0000266"/>
    <property type="project" value="RGD"/>
</dbReference>
<dbReference type="GO" id="GO:0015774">
    <property type="term" value="P:polysaccharide transport"/>
    <property type="evidence" value="ECO:0000266"/>
    <property type="project" value="RGD"/>
</dbReference>
<dbReference type="GO" id="GO:2000304">
    <property type="term" value="P:positive regulation of ceramide biosynthetic process"/>
    <property type="evidence" value="ECO:0000315"/>
    <property type="project" value="RGD"/>
</dbReference>
<dbReference type="GO" id="GO:1903543">
    <property type="term" value="P:positive regulation of exosomal secretion"/>
    <property type="evidence" value="ECO:0000315"/>
    <property type="project" value="BHF-UCL"/>
</dbReference>
<dbReference type="GO" id="GO:0045840">
    <property type="term" value="P:positive regulation of mitotic nuclear division"/>
    <property type="evidence" value="ECO:0000266"/>
    <property type="project" value="RGD"/>
</dbReference>
<dbReference type="GO" id="GO:0045429">
    <property type="term" value="P:positive regulation of nitric oxide biosynthetic process"/>
    <property type="evidence" value="ECO:0000315"/>
    <property type="project" value="RGD"/>
</dbReference>
<dbReference type="GO" id="GO:1901224">
    <property type="term" value="P:positive regulation of non-canonical NF-kappaB signal transduction"/>
    <property type="evidence" value="ECO:0000315"/>
    <property type="project" value="RGD"/>
</dbReference>
<dbReference type="GO" id="GO:0048661">
    <property type="term" value="P:positive regulation of smooth muscle cell proliferation"/>
    <property type="evidence" value="ECO:0000266"/>
    <property type="project" value="RGD"/>
</dbReference>
<dbReference type="GO" id="GO:0061035">
    <property type="term" value="P:regulation of cartilage development"/>
    <property type="evidence" value="ECO:0000266"/>
    <property type="project" value="RGD"/>
</dbReference>
<dbReference type="GO" id="GO:1900125">
    <property type="term" value="P:regulation of hyaluronan biosynthetic process"/>
    <property type="evidence" value="ECO:0000266"/>
    <property type="project" value="RGD"/>
</dbReference>
<dbReference type="GO" id="GO:0002685">
    <property type="term" value="P:regulation of leukocyte migration"/>
    <property type="evidence" value="ECO:0000266"/>
    <property type="project" value="RGD"/>
</dbReference>
<dbReference type="GO" id="GO:0060541">
    <property type="term" value="P:respiratory system development"/>
    <property type="evidence" value="ECO:0000266"/>
    <property type="project" value="RGD"/>
</dbReference>
<dbReference type="GO" id="GO:0007165">
    <property type="term" value="P:signal transduction"/>
    <property type="evidence" value="ECO:0000266"/>
    <property type="project" value="RGD"/>
</dbReference>
<dbReference type="GO" id="GO:0001501">
    <property type="term" value="P:skeletal system development"/>
    <property type="evidence" value="ECO:0000266"/>
    <property type="project" value="RGD"/>
</dbReference>
<dbReference type="GO" id="GO:0090520">
    <property type="term" value="P:sphingolipid mediated signaling pathway"/>
    <property type="evidence" value="ECO:0000266"/>
    <property type="project" value="RGD"/>
</dbReference>
<dbReference type="GO" id="GO:0006665">
    <property type="term" value="P:sphingolipid metabolic process"/>
    <property type="evidence" value="ECO:0000266"/>
    <property type="project" value="RGD"/>
</dbReference>
<dbReference type="GO" id="GO:0006685">
    <property type="term" value="P:sphingomyelin catabolic process"/>
    <property type="evidence" value="ECO:0000266"/>
    <property type="project" value="RGD"/>
</dbReference>
<dbReference type="GO" id="GO:0006684">
    <property type="term" value="P:sphingomyelin metabolic process"/>
    <property type="evidence" value="ECO:0000250"/>
    <property type="project" value="UniProtKB"/>
</dbReference>
<dbReference type="CDD" id="cd09078">
    <property type="entry name" value="nSMase"/>
    <property type="match status" value="1"/>
</dbReference>
<dbReference type="FunFam" id="3.60.10.10:FF:000015">
    <property type="entry name" value="sphingomyelin phosphodiesterase 3"/>
    <property type="match status" value="1"/>
</dbReference>
<dbReference type="Gene3D" id="3.60.10.10">
    <property type="entry name" value="Endonuclease/exonuclease/phosphatase"/>
    <property type="match status" value="1"/>
</dbReference>
<dbReference type="InterPro" id="IPR036691">
    <property type="entry name" value="Endo/exonu/phosph_ase_sf"/>
</dbReference>
<dbReference type="InterPro" id="IPR005135">
    <property type="entry name" value="Endo/exonuclease/phosphatase"/>
</dbReference>
<dbReference type="InterPro" id="IPR038772">
    <property type="entry name" value="Sph/SMPD2-like"/>
</dbReference>
<dbReference type="InterPro" id="IPR017766">
    <property type="entry name" value="Sphingomyelinase/PLipase_C"/>
</dbReference>
<dbReference type="PANTHER" id="PTHR16320:SF8">
    <property type="entry name" value="SPHINGOMYELIN PHOSPHODIESTERASE 3"/>
    <property type="match status" value="1"/>
</dbReference>
<dbReference type="PANTHER" id="PTHR16320">
    <property type="entry name" value="SPHINGOMYELINASE FAMILY MEMBER"/>
    <property type="match status" value="1"/>
</dbReference>
<dbReference type="Pfam" id="PF03372">
    <property type="entry name" value="Exo_endo_phos"/>
    <property type="match status" value="1"/>
</dbReference>
<dbReference type="SUPFAM" id="SSF56219">
    <property type="entry name" value="DNase I-like"/>
    <property type="match status" value="1"/>
</dbReference>
<protein>
    <recommendedName>
        <fullName evidence="9">Sphingomyelin phosphodiesterase 3</fullName>
        <ecNumber evidence="8">3.1.4.12</ecNumber>
    </recommendedName>
    <alternativeName>
        <fullName>Confluent 3Y1 cell-associated protein 1</fullName>
    </alternativeName>
    <alternativeName>
        <fullName>Neutral sphingomyelinase 2</fullName>
        <shortName>nSMase-2</shortName>
        <shortName>nSMase2</shortName>
    </alternativeName>
    <alternativeName>
        <fullName>Neutral sphingomyelinase II</fullName>
    </alternativeName>
</protein>
<keyword id="KW-0131">Cell cycle</keyword>
<keyword id="KW-1003">Cell membrane</keyword>
<keyword id="KW-0217">Developmental protein</keyword>
<keyword id="KW-0333">Golgi apparatus</keyword>
<keyword id="KW-0378">Hydrolase</keyword>
<keyword id="KW-0443">Lipid metabolism</keyword>
<keyword id="KW-0449">Lipoprotein</keyword>
<keyword id="KW-0460">Magnesium</keyword>
<keyword id="KW-0472">Membrane</keyword>
<keyword id="KW-0479">Metal-binding</keyword>
<keyword id="KW-0564">Palmitate</keyword>
<keyword id="KW-0597">Phosphoprotein</keyword>
<keyword id="KW-1185">Reference proteome</keyword>
<keyword id="KW-0746">Sphingolipid metabolism</keyword>